<dbReference type="EMBL" id="AF488576">
    <property type="protein sequence ID" value="AAM10940.1"/>
    <property type="molecule type" value="mRNA"/>
</dbReference>
<dbReference type="EMBL" id="AL138655">
    <property type="protein sequence ID" value="CAB72167.1"/>
    <property type="molecule type" value="Genomic_DNA"/>
</dbReference>
<dbReference type="EMBL" id="CP002686">
    <property type="protein sequence ID" value="AEE79594.1"/>
    <property type="molecule type" value="Genomic_DNA"/>
</dbReference>
<dbReference type="EMBL" id="AK221542">
    <property type="protein sequence ID" value="BAD94899.1"/>
    <property type="molecule type" value="mRNA"/>
</dbReference>
<dbReference type="EMBL" id="BT026419">
    <property type="protein sequence ID" value="ABH04526.1"/>
    <property type="molecule type" value="mRNA"/>
</dbReference>
<dbReference type="PIR" id="T47757">
    <property type="entry name" value="T47757"/>
</dbReference>
<dbReference type="RefSeq" id="NP_191256.1">
    <property type="nucleotide sequence ID" value="NM_115556.4"/>
</dbReference>
<dbReference type="SMR" id="Q9M1K1"/>
<dbReference type="BioGRID" id="10180">
    <property type="interactions" value="8"/>
</dbReference>
<dbReference type="FunCoup" id="Q9M1K1">
    <property type="interactions" value="114"/>
</dbReference>
<dbReference type="IntAct" id="Q9M1K1">
    <property type="interactions" value="8"/>
</dbReference>
<dbReference type="STRING" id="3702.Q9M1K1"/>
<dbReference type="PaxDb" id="3702-AT3G56970.1"/>
<dbReference type="DNASU" id="824864"/>
<dbReference type="EnsemblPlants" id="AT3G56970.1">
    <property type="protein sequence ID" value="AT3G56970.1"/>
    <property type="gene ID" value="AT3G56970"/>
</dbReference>
<dbReference type="GeneID" id="824864"/>
<dbReference type="Gramene" id="AT3G56970.1">
    <property type="protein sequence ID" value="AT3G56970.1"/>
    <property type="gene ID" value="AT3G56970"/>
</dbReference>
<dbReference type="KEGG" id="ath:AT3G56970"/>
<dbReference type="Araport" id="AT3G56970"/>
<dbReference type="TAIR" id="AT3G56970">
    <property type="gene designation" value="BHLH38"/>
</dbReference>
<dbReference type="eggNOG" id="ENOG502RXMR">
    <property type="taxonomic scope" value="Eukaryota"/>
</dbReference>
<dbReference type="HOGENOM" id="CLU_089779_1_1_1"/>
<dbReference type="InParanoid" id="Q9M1K1"/>
<dbReference type="OMA" id="INCEELS"/>
<dbReference type="PhylomeDB" id="Q9M1K1"/>
<dbReference type="PRO" id="PR:Q9M1K1"/>
<dbReference type="Proteomes" id="UP000006548">
    <property type="component" value="Chromosome 3"/>
</dbReference>
<dbReference type="ExpressionAtlas" id="Q9M1K1">
    <property type="expression patterns" value="baseline and differential"/>
</dbReference>
<dbReference type="GO" id="GO:0005634">
    <property type="term" value="C:nucleus"/>
    <property type="evidence" value="ECO:0007669"/>
    <property type="project" value="UniProtKB-SubCell"/>
</dbReference>
<dbReference type="GO" id="GO:0003677">
    <property type="term" value="F:DNA binding"/>
    <property type="evidence" value="ECO:0007669"/>
    <property type="project" value="UniProtKB-KW"/>
</dbReference>
<dbReference type="GO" id="GO:0003700">
    <property type="term" value="F:DNA-binding transcription factor activity"/>
    <property type="evidence" value="ECO:0000250"/>
    <property type="project" value="TAIR"/>
</dbReference>
<dbReference type="GO" id="GO:0046983">
    <property type="term" value="F:protein dimerization activity"/>
    <property type="evidence" value="ECO:0007669"/>
    <property type="project" value="InterPro"/>
</dbReference>
<dbReference type="GO" id="GO:0010106">
    <property type="term" value="P:cellular response to iron ion starvation"/>
    <property type="evidence" value="ECO:0000270"/>
    <property type="project" value="TAIR"/>
</dbReference>
<dbReference type="GO" id="GO:0006355">
    <property type="term" value="P:regulation of DNA-templated transcription"/>
    <property type="evidence" value="ECO:0000304"/>
    <property type="project" value="TAIR"/>
</dbReference>
<dbReference type="GO" id="GO:0006357">
    <property type="term" value="P:regulation of transcription by RNA polymerase II"/>
    <property type="evidence" value="ECO:0007669"/>
    <property type="project" value="InterPro"/>
</dbReference>
<dbReference type="CDD" id="cd18914">
    <property type="entry name" value="bHLH_AtORG2_like"/>
    <property type="match status" value="1"/>
</dbReference>
<dbReference type="FunFam" id="4.10.280.10:FF:000074">
    <property type="entry name" value="Transcription factor ORG2"/>
    <property type="match status" value="1"/>
</dbReference>
<dbReference type="Gene3D" id="4.10.280.10">
    <property type="entry name" value="Helix-loop-helix DNA-binding domain"/>
    <property type="match status" value="1"/>
</dbReference>
<dbReference type="InterPro" id="IPR011598">
    <property type="entry name" value="bHLH_dom"/>
</dbReference>
<dbReference type="InterPro" id="IPR036638">
    <property type="entry name" value="HLH_DNA-bd_sf"/>
</dbReference>
<dbReference type="InterPro" id="IPR015660">
    <property type="entry name" value="MASH1/Ascl1a-like"/>
</dbReference>
<dbReference type="PANTHER" id="PTHR13935">
    <property type="entry name" value="ACHAETE-SCUTE TRANSCRIPTION FACTOR-RELATED"/>
    <property type="match status" value="1"/>
</dbReference>
<dbReference type="PANTHER" id="PTHR13935:SF41">
    <property type="entry name" value="TRANSCRIPTION FACTOR ORG2-RELATED"/>
    <property type="match status" value="1"/>
</dbReference>
<dbReference type="Pfam" id="PF00010">
    <property type="entry name" value="HLH"/>
    <property type="match status" value="1"/>
</dbReference>
<dbReference type="SMART" id="SM00353">
    <property type="entry name" value="HLH"/>
    <property type="match status" value="1"/>
</dbReference>
<dbReference type="SUPFAM" id="SSF47459">
    <property type="entry name" value="HLH, helix-loop-helix DNA-binding domain"/>
    <property type="match status" value="1"/>
</dbReference>
<dbReference type="PROSITE" id="PS50888">
    <property type="entry name" value="BHLH"/>
    <property type="match status" value="1"/>
</dbReference>
<keyword id="KW-0238">DNA-binding</keyword>
<keyword id="KW-0539">Nucleus</keyword>
<keyword id="KW-1185">Reference proteome</keyword>
<keyword id="KW-0804">Transcription</keyword>
<keyword id="KW-0805">Transcription regulation</keyword>
<reference key="1">
    <citation type="journal article" date="2003" name="Mol. Biol. Evol.">
        <title>The basic helix-loop-helix transcription factor family in plants: a genome-wide study of protein structure and functional diversity.</title>
        <authorList>
            <person name="Heim M.A."/>
            <person name="Jakoby M."/>
            <person name="Werber M."/>
            <person name="Martin C."/>
            <person name="Weisshaar B."/>
            <person name="Bailey P.C."/>
        </authorList>
    </citation>
    <scope>NUCLEOTIDE SEQUENCE [MRNA]</scope>
    <scope>TISSUE SPECIFICITY</scope>
    <scope>INDUCTION</scope>
    <scope>GENE FAMILY</scope>
    <scope>NOMENCLATURE</scope>
    <source>
        <strain>cv. Columbia</strain>
    </source>
</reference>
<reference key="2">
    <citation type="journal article" date="2000" name="Nature">
        <title>Sequence and analysis of chromosome 3 of the plant Arabidopsis thaliana.</title>
        <authorList>
            <person name="Salanoubat M."/>
            <person name="Lemcke K."/>
            <person name="Rieger M."/>
            <person name="Ansorge W."/>
            <person name="Unseld M."/>
            <person name="Fartmann B."/>
            <person name="Valle G."/>
            <person name="Bloecker H."/>
            <person name="Perez-Alonso M."/>
            <person name="Obermaier B."/>
            <person name="Delseny M."/>
            <person name="Boutry M."/>
            <person name="Grivell L.A."/>
            <person name="Mache R."/>
            <person name="Puigdomenech P."/>
            <person name="De Simone V."/>
            <person name="Choisne N."/>
            <person name="Artiguenave F."/>
            <person name="Robert C."/>
            <person name="Brottier P."/>
            <person name="Wincker P."/>
            <person name="Cattolico L."/>
            <person name="Weissenbach J."/>
            <person name="Saurin W."/>
            <person name="Quetier F."/>
            <person name="Schaefer M."/>
            <person name="Mueller-Auer S."/>
            <person name="Gabel C."/>
            <person name="Fuchs M."/>
            <person name="Benes V."/>
            <person name="Wurmbach E."/>
            <person name="Drzonek H."/>
            <person name="Erfle H."/>
            <person name="Jordan N."/>
            <person name="Bangert S."/>
            <person name="Wiedelmann R."/>
            <person name="Kranz H."/>
            <person name="Voss H."/>
            <person name="Holland R."/>
            <person name="Brandt P."/>
            <person name="Nyakatura G."/>
            <person name="Vezzi A."/>
            <person name="D'Angelo M."/>
            <person name="Pallavicini A."/>
            <person name="Toppo S."/>
            <person name="Simionati B."/>
            <person name="Conrad A."/>
            <person name="Hornischer K."/>
            <person name="Kauer G."/>
            <person name="Loehnert T.-H."/>
            <person name="Nordsiek G."/>
            <person name="Reichelt J."/>
            <person name="Scharfe M."/>
            <person name="Schoen O."/>
            <person name="Bargues M."/>
            <person name="Terol J."/>
            <person name="Climent J."/>
            <person name="Navarro P."/>
            <person name="Collado C."/>
            <person name="Perez-Perez A."/>
            <person name="Ottenwaelder B."/>
            <person name="Duchemin D."/>
            <person name="Cooke R."/>
            <person name="Laudie M."/>
            <person name="Berger-Llauro C."/>
            <person name="Purnelle B."/>
            <person name="Masuy D."/>
            <person name="de Haan M."/>
            <person name="Maarse A.C."/>
            <person name="Alcaraz J.-P."/>
            <person name="Cottet A."/>
            <person name="Casacuberta E."/>
            <person name="Monfort A."/>
            <person name="Argiriou A."/>
            <person name="Flores M."/>
            <person name="Liguori R."/>
            <person name="Vitale D."/>
            <person name="Mannhaupt G."/>
            <person name="Haase D."/>
            <person name="Schoof H."/>
            <person name="Rudd S."/>
            <person name="Zaccaria P."/>
            <person name="Mewes H.-W."/>
            <person name="Mayer K.F.X."/>
            <person name="Kaul S."/>
            <person name="Town C.D."/>
            <person name="Koo H.L."/>
            <person name="Tallon L.J."/>
            <person name="Jenkins J."/>
            <person name="Rooney T."/>
            <person name="Rizzo M."/>
            <person name="Walts A."/>
            <person name="Utterback T."/>
            <person name="Fujii C.Y."/>
            <person name="Shea T.P."/>
            <person name="Creasy T.H."/>
            <person name="Haas B."/>
            <person name="Maiti R."/>
            <person name="Wu D."/>
            <person name="Peterson J."/>
            <person name="Van Aken S."/>
            <person name="Pai G."/>
            <person name="Militscher J."/>
            <person name="Sellers P."/>
            <person name="Gill J.E."/>
            <person name="Feldblyum T.V."/>
            <person name="Preuss D."/>
            <person name="Lin X."/>
            <person name="Nierman W.C."/>
            <person name="Salzberg S.L."/>
            <person name="White O."/>
            <person name="Venter J.C."/>
            <person name="Fraser C.M."/>
            <person name="Kaneko T."/>
            <person name="Nakamura Y."/>
            <person name="Sato S."/>
            <person name="Kato T."/>
            <person name="Asamizu E."/>
            <person name="Sasamoto S."/>
            <person name="Kimura T."/>
            <person name="Idesawa K."/>
            <person name="Kawashima K."/>
            <person name="Kishida Y."/>
            <person name="Kiyokawa C."/>
            <person name="Kohara M."/>
            <person name="Matsumoto M."/>
            <person name="Matsuno A."/>
            <person name="Muraki A."/>
            <person name="Nakayama S."/>
            <person name="Nakazaki N."/>
            <person name="Shinpo S."/>
            <person name="Takeuchi C."/>
            <person name="Wada T."/>
            <person name="Watanabe A."/>
            <person name="Yamada M."/>
            <person name="Yasuda M."/>
            <person name="Tabata S."/>
        </authorList>
    </citation>
    <scope>NUCLEOTIDE SEQUENCE [LARGE SCALE GENOMIC DNA]</scope>
    <source>
        <strain>cv. Columbia</strain>
    </source>
</reference>
<reference key="3">
    <citation type="journal article" date="2017" name="Plant J.">
        <title>Araport11: a complete reannotation of the Arabidopsis thaliana reference genome.</title>
        <authorList>
            <person name="Cheng C.Y."/>
            <person name="Krishnakumar V."/>
            <person name="Chan A.P."/>
            <person name="Thibaud-Nissen F."/>
            <person name="Schobel S."/>
            <person name="Town C.D."/>
        </authorList>
    </citation>
    <scope>GENOME REANNOTATION</scope>
    <source>
        <strain>cv. Columbia</strain>
    </source>
</reference>
<reference key="4">
    <citation type="submission" date="2005-03" db="EMBL/GenBank/DDBJ databases">
        <title>Large-scale analysis of RIKEN Arabidopsis full-length (RAFL) cDNAs.</title>
        <authorList>
            <person name="Totoki Y."/>
            <person name="Seki M."/>
            <person name="Ishida J."/>
            <person name="Nakajima M."/>
            <person name="Enju A."/>
            <person name="Kamiya A."/>
            <person name="Narusaka M."/>
            <person name="Shin-i T."/>
            <person name="Nakagawa M."/>
            <person name="Sakamoto N."/>
            <person name="Oishi K."/>
            <person name="Kohara Y."/>
            <person name="Kobayashi M."/>
            <person name="Toyoda A."/>
            <person name="Sakaki Y."/>
            <person name="Sakurai T."/>
            <person name="Iida K."/>
            <person name="Akiyama K."/>
            <person name="Satou M."/>
            <person name="Toyoda T."/>
            <person name="Konagaya A."/>
            <person name="Carninci P."/>
            <person name="Kawai J."/>
            <person name="Hayashizaki Y."/>
            <person name="Shinozaki K."/>
        </authorList>
    </citation>
    <scope>NUCLEOTIDE SEQUENCE [LARGE SCALE MRNA]</scope>
    <source>
        <strain>cv. Columbia</strain>
    </source>
</reference>
<reference key="5">
    <citation type="submission" date="2006-08" db="EMBL/GenBank/DDBJ databases">
        <title>Arabidopsis ORF clones.</title>
        <authorList>
            <person name="Quinitio C."/>
            <person name="Chen H."/>
            <person name="Kim C.J."/>
            <person name="Shinn P."/>
            <person name="Ecker J.R."/>
        </authorList>
    </citation>
    <scope>NUCLEOTIDE SEQUENCE [LARGE SCALE MRNA]</scope>
    <source>
        <strain>cv. Columbia</strain>
    </source>
</reference>
<reference key="6">
    <citation type="journal article" date="2003" name="Plant Cell">
        <title>The Arabidopsis basic/helix-loop-helix transcription factor family.</title>
        <authorList>
            <person name="Toledo-Ortiz G."/>
            <person name="Huq E."/>
            <person name="Quail P.H."/>
        </authorList>
    </citation>
    <scope>GENE FAMILY</scope>
</reference>
<reference key="7">
    <citation type="journal article" date="2003" name="Plant Cell">
        <title>Update on the basic helix-loop-helix transcription factor gene family in Arabidopsis thaliana.</title>
        <authorList>
            <person name="Bailey P.C."/>
            <person name="Martin C."/>
            <person name="Toledo-Ortiz G."/>
            <person name="Quail P.H."/>
            <person name="Huq E."/>
            <person name="Heim M.A."/>
            <person name="Jakoby M."/>
            <person name="Werber M."/>
            <person name="Weisshaar B."/>
        </authorList>
    </citation>
    <scope>GENE FAMILY</scope>
    <scope>NOMENCLATURE</scope>
</reference>
<reference key="8">
    <citation type="journal article" date="2003" name="Plant J.">
        <title>Target genes for OBP3, a Dof transcription factor, include novel basic helix-loop-helix domain proteins inducible by salicylic acid.</title>
        <authorList>
            <person name="Kang H.-G."/>
            <person name="Foley R.C."/>
            <person name="Onate-Sanchez L."/>
            <person name="Lin C."/>
            <person name="Singh K.B."/>
        </authorList>
    </citation>
    <scope>INDUCTION BY OBP3; JASMONIC ACID AND SALICYLIC ACID</scope>
</reference>
<reference key="9">
    <citation type="journal article" date="2007" name="Planta">
        <title>Iron deficiency-mediated stress regulation of four subgroup Ib BHLH genes in Arabidopsis thaliana.</title>
        <authorList>
            <person name="Wang H.-Y."/>
            <person name="Klatte M."/>
            <person name="Jakoby M."/>
            <person name="Baeumlein H."/>
            <person name="Weisshaar B."/>
            <person name="Bauer P."/>
        </authorList>
    </citation>
    <scope>INDUCTION</scope>
</reference>
<proteinExistence type="evidence at protein level"/>
<organism>
    <name type="scientific">Arabidopsis thaliana</name>
    <name type="common">Mouse-ear cress</name>
    <dbReference type="NCBI Taxonomy" id="3702"/>
    <lineage>
        <taxon>Eukaryota</taxon>
        <taxon>Viridiplantae</taxon>
        <taxon>Streptophyta</taxon>
        <taxon>Embryophyta</taxon>
        <taxon>Tracheophyta</taxon>
        <taxon>Spermatophyta</taxon>
        <taxon>Magnoliopsida</taxon>
        <taxon>eudicotyledons</taxon>
        <taxon>Gunneridae</taxon>
        <taxon>Pentapetalae</taxon>
        <taxon>rosids</taxon>
        <taxon>malvids</taxon>
        <taxon>Brassicales</taxon>
        <taxon>Brassicaceae</taxon>
        <taxon>Camelineae</taxon>
        <taxon>Arabidopsis</taxon>
    </lineage>
</organism>
<name>ORG2_ARATH</name>
<protein>
    <recommendedName>
        <fullName>Transcription factor ORG2</fullName>
    </recommendedName>
    <alternativeName>
        <fullName>Basic helix-loop-helix protein 38</fullName>
        <shortName>AtbHLH38</shortName>
        <shortName>bHLH 38</shortName>
    </alternativeName>
    <alternativeName>
        <fullName>OBP3-responsive gene 2</fullName>
    </alternativeName>
    <alternativeName>
        <fullName>Transcription factor EN 8</fullName>
    </alternativeName>
    <alternativeName>
        <fullName>bHLH transcription factor bHLH038</fullName>
    </alternativeName>
</protein>
<evidence type="ECO:0000255" key="1">
    <source>
        <dbReference type="PROSITE-ProRule" id="PRU00981"/>
    </source>
</evidence>
<evidence type="ECO:0000269" key="2">
    <source>
    </source>
</evidence>
<evidence type="ECO:0000269" key="3">
    <source>
    </source>
</evidence>
<evidence type="ECO:0000269" key="4">
    <source>
    </source>
</evidence>
<evidence type="ECO:0000305" key="5"/>
<feature type="chain" id="PRO_0000358850" description="Transcription factor ORG2">
    <location>
        <begin position="1"/>
        <end position="253"/>
    </location>
</feature>
<feature type="domain" description="bHLH" evidence="1">
    <location>
        <begin position="71"/>
        <end position="123"/>
    </location>
</feature>
<accession>Q9M1K1</accession>
<sequence>MCALVPSFFTNFGWPSTNQYESYYGAGDNLNNGTFLELTVPQTYEVTHHQNSLGVSVSSEGNEIDNNPVVVKKLNHNASERDRRKKINTLFSSLRSCLPASDQSKKLSIPETVSKSLKYIPELQQQVKRLIQKKEEILVRVSGQRDFELYDKQQPKAVASYLSTVSATRLGDNEVMVQVSSSKIHNFSISNVLGGIEEDGFVLVDVSSSRSQGERLFYTLHLQVENMDDYKINCEELSERMLYLYEKCENSFN</sequence>
<gene>
    <name type="primary">ORG2</name>
    <name type="synonym">BHLH38</name>
    <name type="synonym">EN8</name>
    <name type="ordered locus">At3g56970</name>
    <name type="ORF">F24I3.50</name>
</gene>
<comment type="subunit">
    <text evidence="5">Homodimer.</text>
</comment>
<comment type="interaction">
    <interactant intactId="EBI-1640553">
        <id>Q9M1K1</id>
    </interactant>
    <interactant intactId="EBI-1640543">
        <id>Q0V7X4</id>
        <label>FIT</label>
    </interactant>
    <organismsDiffer>false</organismsDiffer>
    <experiments>5</experiments>
</comment>
<comment type="subcellular location">
    <subcellularLocation>
        <location evidence="1">Nucleus</location>
    </subcellularLocation>
</comment>
<comment type="tissue specificity">
    <text evidence="2">Roots.</text>
</comment>
<comment type="induction">
    <text evidence="2 3 4">Induced by OBP3, auxin and salicylic acid (SA). Repressed by jasmonic acid (JA), UV LIGHT, and heat treatments. Up regulated by iron deficiency in roots and leaves, as well as by nickel, high zinc or high copper treatments. Repressed by high iron, low copper and low zinc treatments.</text>
</comment>